<proteinExistence type="evidence at protein level"/>
<reference key="1">
    <citation type="journal article" date="2004" name="Genome Res.">
        <title>The status, quality, and expansion of the NIH full-length cDNA project: the Mammalian Gene Collection (MGC).</title>
        <authorList>
            <consortium name="The MGC Project Team"/>
        </authorList>
    </citation>
    <scope>NUCLEOTIDE SEQUENCE [LARGE SCALE MRNA]</scope>
    <source>
        <strain>FVB/N</strain>
        <tissue>Mammary tumor</tissue>
    </source>
</reference>
<reference key="2">
    <citation type="journal article" date="2005" name="Science">
        <title>The transcriptional landscape of the mammalian genome.</title>
        <authorList>
            <person name="Carninci P."/>
            <person name="Kasukawa T."/>
            <person name="Katayama S."/>
            <person name="Gough J."/>
            <person name="Frith M.C."/>
            <person name="Maeda N."/>
            <person name="Oyama R."/>
            <person name="Ravasi T."/>
            <person name="Lenhard B."/>
            <person name="Wells C."/>
            <person name="Kodzius R."/>
            <person name="Shimokawa K."/>
            <person name="Bajic V.B."/>
            <person name="Brenner S.E."/>
            <person name="Batalov S."/>
            <person name="Forrest A.R."/>
            <person name="Zavolan M."/>
            <person name="Davis M.J."/>
            <person name="Wilming L.G."/>
            <person name="Aidinis V."/>
            <person name="Allen J.E."/>
            <person name="Ambesi-Impiombato A."/>
            <person name="Apweiler R."/>
            <person name="Aturaliya R.N."/>
            <person name="Bailey T.L."/>
            <person name="Bansal M."/>
            <person name="Baxter L."/>
            <person name="Beisel K.W."/>
            <person name="Bersano T."/>
            <person name="Bono H."/>
            <person name="Chalk A.M."/>
            <person name="Chiu K.P."/>
            <person name="Choudhary V."/>
            <person name="Christoffels A."/>
            <person name="Clutterbuck D.R."/>
            <person name="Crowe M.L."/>
            <person name="Dalla E."/>
            <person name="Dalrymple B.P."/>
            <person name="de Bono B."/>
            <person name="Della Gatta G."/>
            <person name="di Bernardo D."/>
            <person name="Down T."/>
            <person name="Engstrom P."/>
            <person name="Fagiolini M."/>
            <person name="Faulkner G."/>
            <person name="Fletcher C.F."/>
            <person name="Fukushima T."/>
            <person name="Furuno M."/>
            <person name="Futaki S."/>
            <person name="Gariboldi M."/>
            <person name="Georgii-Hemming P."/>
            <person name="Gingeras T.R."/>
            <person name="Gojobori T."/>
            <person name="Green R.E."/>
            <person name="Gustincich S."/>
            <person name="Harbers M."/>
            <person name="Hayashi Y."/>
            <person name="Hensch T.K."/>
            <person name="Hirokawa N."/>
            <person name="Hill D."/>
            <person name="Huminiecki L."/>
            <person name="Iacono M."/>
            <person name="Ikeo K."/>
            <person name="Iwama A."/>
            <person name="Ishikawa T."/>
            <person name="Jakt M."/>
            <person name="Kanapin A."/>
            <person name="Katoh M."/>
            <person name="Kawasawa Y."/>
            <person name="Kelso J."/>
            <person name="Kitamura H."/>
            <person name="Kitano H."/>
            <person name="Kollias G."/>
            <person name="Krishnan S.P."/>
            <person name="Kruger A."/>
            <person name="Kummerfeld S.K."/>
            <person name="Kurochkin I.V."/>
            <person name="Lareau L.F."/>
            <person name="Lazarevic D."/>
            <person name="Lipovich L."/>
            <person name="Liu J."/>
            <person name="Liuni S."/>
            <person name="McWilliam S."/>
            <person name="Madan Babu M."/>
            <person name="Madera M."/>
            <person name="Marchionni L."/>
            <person name="Matsuda H."/>
            <person name="Matsuzawa S."/>
            <person name="Miki H."/>
            <person name="Mignone F."/>
            <person name="Miyake S."/>
            <person name="Morris K."/>
            <person name="Mottagui-Tabar S."/>
            <person name="Mulder N."/>
            <person name="Nakano N."/>
            <person name="Nakauchi H."/>
            <person name="Ng P."/>
            <person name="Nilsson R."/>
            <person name="Nishiguchi S."/>
            <person name="Nishikawa S."/>
            <person name="Nori F."/>
            <person name="Ohara O."/>
            <person name="Okazaki Y."/>
            <person name="Orlando V."/>
            <person name="Pang K.C."/>
            <person name="Pavan W.J."/>
            <person name="Pavesi G."/>
            <person name="Pesole G."/>
            <person name="Petrovsky N."/>
            <person name="Piazza S."/>
            <person name="Reed J."/>
            <person name="Reid J.F."/>
            <person name="Ring B.Z."/>
            <person name="Ringwald M."/>
            <person name="Rost B."/>
            <person name="Ruan Y."/>
            <person name="Salzberg S.L."/>
            <person name="Sandelin A."/>
            <person name="Schneider C."/>
            <person name="Schoenbach C."/>
            <person name="Sekiguchi K."/>
            <person name="Semple C.A."/>
            <person name="Seno S."/>
            <person name="Sessa L."/>
            <person name="Sheng Y."/>
            <person name="Shibata Y."/>
            <person name="Shimada H."/>
            <person name="Shimada K."/>
            <person name="Silva D."/>
            <person name="Sinclair B."/>
            <person name="Sperling S."/>
            <person name="Stupka E."/>
            <person name="Sugiura K."/>
            <person name="Sultana R."/>
            <person name="Takenaka Y."/>
            <person name="Taki K."/>
            <person name="Tammoja K."/>
            <person name="Tan S.L."/>
            <person name="Tang S."/>
            <person name="Taylor M.S."/>
            <person name="Tegner J."/>
            <person name="Teichmann S.A."/>
            <person name="Ueda H.R."/>
            <person name="van Nimwegen E."/>
            <person name="Verardo R."/>
            <person name="Wei C.L."/>
            <person name="Yagi K."/>
            <person name="Yamanishi H."/>
            <person name="Zabarovsky E."/>
            <person name="Zhu S."/>
            <person name="Zimmer A."/>
            <person name="Hide W."/>
            <person name="Bult C."/>
            <person name="Grimmond S.M."/>
            <person name="Teasdale R.D."/>
            <person name="Liu E.T."/>
            <person name="Brusic V."/>
            <person name="Quackenbush J."/>
            <person name="Wahlestedt C."/>
            <person name="Mattick J.S."/>
            <person name="Hume D.A."/>
            <person name="Kai C."/>
            <person name="Sasaki D."/>
            <person name="Tomaru Y."/>
            <person name="Fukuda S."/>
            <person name="Kanamori-Katayama M."/>
            <person name="Suzuki M."/>
            <person name="Aoki J."/>
            <person name="Arakawa T."/>
            <person name="Iida J."/>
            <person name="Imamura K."/>
            <person name="Itoh M."/>
            <person name="Kato T."/>
            <person name="Kawaji H."/>
            <person name="Kawagashira N."/>
            <person name="Kawashima T."/>
            <person name="Kojima M."/>
            <person name="Kondo S."/>
            <person name="Konno H."/>
            <person name="Nakano K."/>
            <person name="Ninomiya N."/>
            <person name="Nishio T."/>
            <person name="Okada M."/>
            <person name="Plessy C."/>
            <person name="Shibata K."/>
            <person name="Shiraki T."/>
            <person name="Suzuki S."/>
            <person name="Tagami M."/>
            <person name="Waki K."/>
            <person name="Watahiki A."/>
            <person name="Okamura-Oho Y."/>
            <person name="Suzuki H."/>
            <person name="Kawai J."/>
            <person name="Hayashizaki Y."/>
        </authorList>
    </citation>
    <scope>NUCLEOTIDE SEQUENCE [LARGE SCALE MRNA] OF 1-149</scope>
    <source>
        <strain>C57BL/6J</strain>
        <tissue>Spinal cord</tissue>
    </source>
</reference>
<reference key="3">
    <citation type="journal article" date="2008" name="Circ. Res.">
        <title>Kindlin-2 is an essential component of intercalated discs and is required for vertebrate cardiac structure and function.</title>
        <authorList>
            <person name="Dowling J.J."/>
            <person name="Gibbs E."/>
            <person name="Russell M."/>
            <person name="Goldman D."/>
            <person name="Minarcik J."/>
            <person name="Golden J.A."/>
            <person name="Feldman E.L."/>
        </authorList>
    </citation>
    <scope>DISRUPTION PHENOTYPE</scope>
    <scope>FUNCTION</scope>
    <scope>SUBCELLULAR LOCATION</scope>
    <scope>TISSUE SPECIFICITY</scope>
</reference>
<reference key="4">
    <citation type="journal article" date="2008" name="Genes Dev.">
        <title>Kindlin-2 controls bidirectional signaling of integrins.</title>
        <authorList>
            <person name="Montanez E."/>
            <person name="Ussar S."/>
            <person name="Schifferer M."/>
            <person name="Bosl M."/>
            <person name="Zent R."/>
            <person name="Moser M."/>
            <person name="Fassler R."/>
        </authorList>
    </citation>
    <scope>DISRUPTION PHENOTYPE</scope>
    <scope>FUNCTION</scope>
    <scope>INTERACTION WITH ILK; ITGB1 AND ITGB3</scope>
    <scope>MUTAGENESIS OF 614-GLN-TRP-615</scope>
</reference>
<reference key="5">
    <citation type="journal article" date="2010" name="Cell">
        <title>A tissue-specific atlas of mouse protein phosphorylation and expression.</title>
        <authorList>
            <person name="Huttlin E.L."/>
            <person name="Jedrychowski M.P."/>
            <person name="Elias J.E."/>
            <person name="Goswami T."/>
            <person name="Rad R."/>
            <person name="Beausoleil S.A."/>
            <person name="Villen J."/>
            <person name="Haas W."/>
            <person name="Sowa M.E."/>
            <person name="Gygi S.P."/>
        </authorList>
    </citation>
    <scope>PHOSPHORYLATION [LARGE SCALE ANALYSIS] AT SER-159 AND SER-666</scope>
    <scope>IDENTIFICATION BY MASS SPECTROMETRY [LARGE SCALE ANALYSIS]</scope>
    <source>
        <tissue>Brain</tissue>
        <tissue>Brown adipose tissue</tissue>
        <tissue>Heart</tissue>
        <tissue>Kidney</tissue>
        <tissue>Liver</tissue>
        <tissue>Lung</tissue>
        <tissue>Pancreas</tissue>
        <tissue>Spleen</tissue>
        <tissue>Testis</tissue>
    </source>
</reference>
<reference key="6">
    <citation type="journal article" date="2011" name="Blood">
        <title>The integrin coactivator kindlin-2 plays a critical role in angiogenesis in mice and zebrafish.</title>
        <authorList>
            <person name="Pluskota E."/>
            <person name="Dowling J.J."/>
            <person name="Gordon N."/>
            <person name="Golden J.A."/>
            <person name="Szpak D."/>
            <person name="West X.Z."/>
            <person name="Nestor C."/>
            <person name="Ma Y.Q."/>
            <person name="Bialkowska K."/>
            <person name="Byzova T."/>
            <person name="Plow E.F."/>
        </authorList>
    </citation>
    <scope>DISRUPTION PHENOTYPE</scope>
    <scope>FUNCTION</scope>
</reference>
<reference key="7">
    <citation type="journal article" date="2011" name="J. Cell Biol.">
        <title>Osteoblast mineralization requires beta1 integrin/ICAP-1-dependent fibronectin deposition.</title>
        <authorList>
            <person name="Brunner M."/>
            <person name="Millon-Fremillon A."/>
            <person name="Chevalier G."/>
            <person name="Nakchbandi I.A."/>
            <person name="Mosher D."/>
            <person name="Block M.R."/>
            <person name="Albiges-Rizo C."/>
            <person name="Bouvard D."/>
        </authorList>
    </citation>
    <scope>SUBCELLULAR LOCATION</scope>
</reference>
<accession>Q8CIB5</accession>
<accession>Q8C542</accession>
<accession>Q8K035</accession>
<feature type="chain" id="PRO_0000219457" description="Fermitin family homolog 2">
    <location>
        <begin position="1"/>
        <end position="680"/>
    </location>
</feature>
<feature type="domain" description="FERM">
    <location>
        <begin position="189"/>
        <end position="661"/>
    </location>
</feature>
<feature type="domain" description="PH" evidence="3">
    <location>
        <begin position="380"/>
        <end position="476"/>
    </location>
</feature>
<feature type="region of interest" description="Interaction with membranes containing phosphatidylinositol phosphate" evidence="1">
    <location>
        <begin position="40"/>
        <end position="81"/>
    </location>
</feature>
<feature type="region of interest" description="Disordered" evidence="4">
    <location>
        <begin position="141"/>
        <end position="162"/>
    </location>
</feature>
<feature type="binding site" evidence="1">
    <location>
        <position position="383"/>
    </location>
    <ligand>
        <name>a 1,2-diacyl-sn-glycero-3-phospho-(1D-myo-inositol-3,4,5-trisphosphate)</name>
        <dbReference type="ChEBI" id="CHEBI:57836"/>
    </ligand>
</feature>
<feature type="modified residue" description="Phosphoserine" evidence="9">
    <location>
        <position position="159"/>
    </location>
</feature>
<feature type="modified residue" description="Phosphoserine" evidence="2">
    <location>
        <position position="181"/>
    </location>
</feature>
<feature type="modified residue" description="Phosphoserine" evidence="2">
    <location>
        <position position="339"/>
    </location>
</feature>
<feature type="modified residue" description="Phosphoserine" evidence="2">
    <location>
        <position position="351"/>
    </location>
</feature>
<feature type="modified residue" description="Phosphoserine" evidence="9">
    <location>
        <position position="666"/>
    </location>
</feature>
<feature type="mutagenesis site" description="Abolishes interaction with integrins ITGB1 and ITGB3." evidence="6">
    <original>QW</original>
    <variation>AA</variation>
    <location>
        <begin position="614"/>
        <end position="615"/>
    </location>
</feature>
<feature type="sequence conflict" description="In Ref. 2; BAC37692." evidence="8" ref="2">
    <original>K</original>
    <variation>R</variation>
    <location>
        <position position="149"/>
    </location>
</feature>
<feature type="strand" evidence="13">
    <location>
        <begin position="5"/>
        <end position="7"/>
    </location>
</feature>
<feature type="strand" evidence="13">
    <location>
        <begin position="18"/>
        <end position="24"/>
    </location>
</feature>
<feature type="helix" evidence="13">
    <location>
        <begin position="25"/>
        <end position="27"/>
    </location>
</feature>
<feature type="strand" evidence="13">
    <location>
        <begin position="29"/>
        <end position="35"/>
    </location>
</feature>
<feature type="strand" evidence="11">
    <location>
        <begin position="37"/>
        <end position="40"/>
    </location>
</feature>
<feature type="helix" evidence="13">
    <location>
        <begin position="41"/>
        <end position="51"/>
    </location>
</feature>
<feature type="strand" evidence="13">
    <location>
        <begin position="54"/>
        <end position="56"/>
    </location>
</feature>
<feature type="strand" evidence="13">
    <location>
        <begin position="61"/>
        <end position="65"/>
    </location>
</feature>
<feature type="turn" evidence="13">
    <location>
        <begin position="66"/>
        <end position="69"/>
    </location>
</feature>
<feature type="strand" evidence="10">
    <location>
        <begin position="70"/>
        <end position="72"/>
    </location>
</feature>
<feature type="turn" evidence="13">
    <location>
        <begin position="79"/>
        <end position="83"/>
    </location>
</feature>
<feature type="strand" evidence="13">
    <location>
        <begin position="89"/>
        <end position="102"/>
    </location>
</feature>
<feature type="strand" evidence="13">
    <location>
        <begin position="108"/>
        <end position="114"/>
    </location>
</feature>
<feature type="helix" evidence="13">
    <location>
        <begin position="119"/>
        <end position="129"/>
    </location>
</feature>
<feature type="helix" evidence="13">
    <location>
        <begin position="135"/>
        <end position="137"/>
    </location>
</feature>
<feature type="strand" evidence="13">
    <location>
        <begin position="138"/>
        <end position="142"/>
    </location>
</feature>
<feature type="helix" evidence="13">
    <location>
        <begin position="220"/>
        <end position="222"/>
    </location>
</feature>
<feature type="helix" evidence="13">
    <location>
        <begin position="230"/>
        <end position="236"/>
    </location>
</feature>
<feature type="helix" evidence="13">
    <location>
        <begin position="242"/>
        <end position="248"/>
    </location>
</feature>
<feature type="helix" evidence="13">
    <location>
        <begin position="249"/>
        <end position="251"/>
    </location>
</feature>
<feature type="strand" evidence="13">
    <location>
        <begin position="257"/>
        <end position="259"/>
    </location>
</feature>
<feature type="helix" evidence="13">
    <location>
        <begin position="260"/>
        <end position="262"/>
    </location>
</feature>
<feature type="strand" evidence="13">
    <location>
        <begin position="269"/>
        <end position="274"/>
    </location>
</feature>
<feature type="turn" evidence="13">
    <location>
        <begin position="284"/>
        <end position="286"/>
    </location>
</feature>
<feature type="helix" evidence="13">
    <location>
        <begin position="288"/>
        <end position="303"/>
    </location>
</feature>
<feature type="helix" evidence="13">
    <location>
        <begin position="311"/>
        <end position="332"/>
    </location>
</feature>
<feature type="strand" evidence="10">
    <location>
        <begin position="337"/>
        <end position="339"/>
    </location>
</feature>
<feature type="helix" evidence="10">
    <location>
        <begin position="343"/>
        <end position="345"/>
    </location>
</feature>
<feature type="strand" evidence="12">
    <location>
        <begin position="514"/>
        <end position="516"/>
    </location>
</feature>
<feature type="helix" evidence="13">
    <location>
        <begin position="518"/>
        <end position="521"/>
    </location>
</feature>
<feature type="helix" evidence="13">
    <location>
        <begin position="524"/>
        <end position="529"/>
    </location>
</feature>
<feature type="helix" evidence="13">
    <location>
        <begin position="532"/>
        <end position="564"/>
    </location>
</feature>
<feature type="turn" evidence="13">
    <location>
        <begin position="566"/>
        <end position="569"/>
    </location>
</feature>
<feature type="strand" evidence="13">
    <location>
        <begin position="571"/>
        <end position="577"/>
    </location>
</feature>
<feature type="strand" evidence="13">
    <location>
        <begin position="584"/>
        <end position="588"/>
    </location>
</feature>
<feature type="strand" evidence="13">
    <location>
        <begin position="590"/>
        <end position="596"/>
    </location>
</feature>
<feature type="turn" evidence="13">
    <location>
        <begin position="598"/>
        <end position="600"/>
    </location>
</feature>
<feature type="strand" evidence="13">
    <location>
        <begin position="603"/>
        <end position="608"/>
    </location>
</feature>
<feature type="helix" evidence="13">
    <location>
        <begin position="609"/>
        <end position="611"/>
    </location>
</feature>
<feature type="strand" evidence="13">
    <location>
        <begin position="612"/>
        <end position="618"/>
    </location>
</feature>
<feature type="turn" evidence="13">
    <location>
        <begin position="619"/>
        <end position="622"/>
    </location>
</feature>
<feature type="strand" evidence="13">
    <location>
        <begin position="623"/>
        <end position="631"/>
    </location>
</feature>
<feature type="strand" evidence="13">
    <location>
        <begin position="634"/>
        <end position="637"/>
    </location>
</feature>
<feature type="helix" evidence="13">
    <location>
        <begin position="640"/>
        <end position="657"/>
    </location>
</feature>
<feature type="helix" evidence="13">
    <location>
        <begin position="669"/>
        <end position="675"/>
    </location>
</feature>
<keyword id="KW-0002">3D-structure</keyword>
<keyword id="KW-0130">Cell adhesion</keyword>
<keyword id="KW-0965">Cell junction</keyword>
<keyword id="KW-1003">Cell membrane</keyword>
<keyword id="KW-0966">Cell projection</keyword>
<keyword id="KW-0133">Cell shape</keyword>
<keyword id="KW-0963">Cytoplasm</keyword>
<keyword id="KW-0206">Cytoskeleton</keyword>
<keyword id="KW-0446">Lipid-binding</keyword>
<keyword id="KW-0472">Membrane</keyword>
<keyword id="KW-0539">Nucleus</keyword>
<keyword id="KW-0597">Phosphoprotein</keyword>
<keyword id="KW-1185">Reference proteome</keyword>
<keyword id="KW-0879">Wnt signaling pathway</keyword>
<name>FERM2_MOUSE</name>
<gene>
    <name type="primary">Fermt2</name>
    <name type="synonym">Plekhc1</name>
</gene>
<evidence type="ECO:0000250" key="1"/>
<evidence type="ECO:0000250" key="2">
    <source>
        <dbReference type="UniProtKB" id="Q96AC1"/>
    </source>
</evidence>
<evidence type="ECO:0000255" key="3">
    <source>
        <dbReference type="PROSITE-ProRule" id="PRU00145"/>
    </source>
</evidence>
<evidence type="ECO:0000256" key="4">
    <source>
        <dbReference type="SAM" id="MobiDB-lite"/>
    </source>
</evidence>
<evidence type="ECO:0000269" key="5">
    <source>
    </source>
</evidence>
<evidence type="ECO:0000269" key="6">
    <source>
    </source>
</evidence>
<evidence type="ECO:0000269" key="7">
    <source>
    </source>
</evidence>
<evidence type="ECO:0000305" key="8"/>
<evidence type="ECO:0007744" key="9">
    <source>
    </source>
</evidence>
<evidence type="ECO:0007829" key="10">
    <source>
        <dbReference type="PDB" id="5XPY"/>
    </source>
</evidence>
<evidence type="ECO:0007829" key="11">
    <source>
        <dbReference type="PDB" id="5XPZ"/>
    </source>
</evidence>
<evidence type="ECO:0007829" key="12">
    <source>
        <dbReference type="PDB" id="5XQ1"/>
    </source>
</evidence>
<evidence type="ECO:0007829" key="13">
    <source>
        <dbReference type="PDB" id="8TEC"/>
    </source>
</evidence>
<comment type="function">
    <text evidence="5 6 7">Scaffolding protein that enhances integrin activation mediated by TLN1 and/or TLN2, but activates integrins only weakly by itself. Binds to membranes enriched in phosphoinositides. Enhances integrin-mediated cell adhesion onto the extracellular matrix and cell spreading; this requires both its ability to interact with integrins and with phospholipid membranes. Required for the assembly of focal adhesions. Participates in the connection between extracellular matrix adhesion sites and the actin cytoskeleton and also in the orchestration of actin assembly and cell shape modulation. Recruits FBLIM1 to focal adhesions. Plays a role in the TGFB1 and integrin signaling pathways. Stabilizes active CTNNB1 and plays a role in the regulation of transcription mediated by CTNNB1 and TCF7L2/TCF4 and in Wnt signaling.</text>
</comment>
<comment type="subunit">
    <text evidence="1 6">Interacts with ITGB1; the interaction is inhibited in presence of ITGB1BP1. Interacts with FBLIM1. Interacts with active, unphosphorylated CTNNB1. Identified in a complex with CTNNB1 and TCF7L2/TCF4 (By similarity). Interacts with ILK, ITGB1 and ITGB3.</text>
</comment>
<comment type="subcellular location">
    <subcellularLocation>
        <location evidence="1">Cytoplasm</location>
    </subcellularLocation>
    <subcellularLocation>
        <location evidence="1">Cytoplasm</location>
        <location evidence="1">Cell cortex</location>
    </subcellularLocation>
    <subcellularLocation>
        <location evidence="1">Cytoplasm</location>
        <location evidence="1">Cytoskeleton</location>
    </subcellularLocation>
    <subcellularLocation>
        <location evidence="1">Cytoplasm</location>
        <location evidence="1">Cytoskeleton</location>
        <location evidence="1">Stress fiber</location>
    </subcellularLocation>
    <subcellularLocation>
        <location evidence="1">Cell junction</location>
        <location evidence="1">Focal adhesion</location>
    </subcellularLocation>
    <subcellularLocation>
        <location evidence="1">Membrane</location>
        <topology evidence="1">Peripheral membrane protein</topology>
        <orientation evidence="1">Cytoplasmic side</orientation>
    </subcellularLocation>
    <subcellularLocation>
        <location evidence="1">Cell projection</location>
        <location evidence="1">Lamellipodium membrane</location>
        <topology evidence="1">Peripheral membrane protein</topology>
        <orientation evidence="1">Cytoplasmic side</orientation>
    </subcellularLocation>
    <subcellularLocation>
        <location evidence="1">Nucleus</location>
    </subcellularLocation>
    <subcellularLocation>
        <location>Cytoplasm</location>
        <location>Myofibril</location>
        <location>Sarcomere</location>
        <location>I band</location>
    </subcellularLocation>
    <subcellularLocation>
        <location>Cell surface</location>
    </subcellularLocation>
    <text evidence="1">Colocalizes with actin stress fibers at cell-ECM focal adhesion sites. Colocalizes with ITGB3 at lamellipodia at the leading edge of spreading cells. Binds to membranes that contain phosphatidylinositides (By similarity).</text>
</comment>
<comment type="tissue specificity">
    <text evidence="5">Detected in adult heart muscle (at protein level). Detected in heart, skeletal muscle and testis.</text>
</comment>
<comment type="domain">
    <text>The FERM domain is not correctly detected by PROSITE or Pfam techniques because it contains the insertion of a PH domain.</text>
</comment>
<comment type="domain">
    <text evidence="1">The PH domain binds phospholipids. Binds preferentially phosphatidylinositol-3,4,5-trisphosphate, and has lower affinity for phosphatidylinositol-4,5-bisphosphate (By similarity).</text>
</comment>
<comment type="domain">
    <text evidence="1">The N-terminal region displays a ubiquitin-type fold and mediates interaction with membranes containing negatively charged phosphatidylinositol phosphate via a surface enriched in positively charged residues.</text>
</comment>
<comment type="disruption phenotype">
    <text evidence="5 6 7">Complete embryonic lethality at peri-implantation stage, due to severe detachment of the endoderm and epiblast from the basement membrane. Heterozygous mice lacking one copy of Fermt2 show no visible phenotype, but show decreased tumor angiogenesis upon transplantation of tumor cells, and their blood vessels are abnormally leaky.</text>
</comment>
<comment type="similarity">
    <text evidence="8">Belongs to the kindlin family.</text>
</comment>
<comment type="sequence caution" evidence="8">
    <conflict type="erroneous initiation">
        <sequence resource="EMBL-CDS" id="AAH34168"/>
    </conflict>
    <text>Truncated N-terminus.</text>
</comment>
<sequence>MALDGIRMPDGCYADGTWELSVHVTDLNRDVTLRVTGEVHIGGVMLKLVEKLDVKKDWSDHALWWEKKRTWLLKTHWTLDKCGIQADAKLQFTPQHKLLRLQLPNMKYVKVKVNFSDRVFKAVSDICKTFNIRHPEELSLLKKPRDPTKKKKKKLDDQSEDEALELEGPLIMPGSGSIYSSPGLYSKTMTPTYDAHDGSPLSPTSAWFGDSALSEGNPGILAVSQPVTSPEILAKMFKPQALLDKAKTNQGWLDSSRSLMEQDVKENEALLLRFKYYSFFDLNPKYDAIRINQLYEQAKWALLLEEIECTEEEMMMFAALQYHINKLSIMTSENHLNNSDKEVDEVDAALSDLEITLEGGKTSTILGDITSIPELADYIKVFKPKKLTLKGYKQYWCTFKDTSISCYKSREESSGTPAHQLNLRGCEVTPDVNISGQKFNIKLLIPVAEGMNEIWLRCDNEKQYAHWMAACRLASKGKTMADSSYNLEVQNILSFLKMQHLNPDPQLIPDQITTDVNPECLVSPRYLKKYKSKQITARILEAHQNVAQMSLIEAKMRFIQAWQSLPEFGITHFIARFQGGKREELIGIAYNRLIRMDASTGDAIKTWRFSNMKQWNVNWEIKMVTVEFADEVRLSFICTEVDCKVVHEFIGGYIFLSTRAKDQNESLDEEMFYKLTSGWV</sequence>
<organism>
    <name type="scientific">Mus musculus</name>
    <name type="common">Mouse</name>
    <dbReference type="NCBI Taxonomy" id="10090"/>
    <lineage>
        <taxon>Eukaryota</taxon>
        <taxon>Metazoa</taxon>
        <taxon>Chordata</taxon>
        <taxon>Craniata</taxon>
        <taxon>Vertebrata</taxon>
        <taxon>Euteleostomi</taxon>
        <taxon>Mammalia</taxon>
        <taxon>Eutheria</taxon>
        <taxon>Euarchontoglires</taxon>
        <taxon>Glires</taxon>
        <taxon>Rodentia</taxon>
        <taxon>Myomorpha</taxon>
        <taxon>Muroidea</taxon>
        <taxon>Muridae</taxon>
        <taxon>Murinae</taxon>
        <taxon>Mus</taxon>
        <taxon>Mus</taxon>
    </lineage>
</organism>
<protein>
    <recommendedName>
        <fullName>Fermitin family homolog 2</fullName>
    </recommendedName>
    <alternativeName>
        <fullName>Kindlin-2</fullName>
    </alternativeName>
    <alternativeName>
        <fullName>Pleckstrin homology domain-containing family C member 1</fullName>
    </alternativeName>
</protein>
<dbReference type="EMBL" id="BC033436">
    <property type="protein sequence ID" value="AAH33436.1"/>
    <property type="molecule type" value="mRNA"/>
</dbReference>
<dbReference type="EMBL" id="BC034168">
    <property type="protein sequence ID" value="AAH34168.1"/>
    <property type="status" value="ALT_INIT"/>
    <property type="molecule type" value="mRNA"/>
</dbReference>
<dbReference type="EMBL" id="AK079588">
    <property type="protein sequence ID" value="BAC37692.1"/>
    <property type="molecule type" value="mRNA"/>
</dbReference>
<dbReference type="CCDS" id="CCDS26977.1"/>
<dbReference type="RefSeq" id="NP_666166.2">
    <property type="nucleotide sequence ID" value="NM_146054.4"/>
</dbReference>
<dbReference type="PDB" id="5XPY">
    <property type="method" value="X-ray"/>
    <property type="resolution" value="2.10 A"/>
    <property type="chains" value="A=15-680"/>
</dbReference>
<dbReference type="PDB" id="5XPZ">
    <property type="method" value="X-ray"/>
    <property type="resolution" value="2.60 A"/>
    <property type="chains" value="A/B=1-680"/>
</dbReference>
<dbReference type="PDB" id="5XQ0">
    <property type="method" value="X-ray"/>
    <property type="resolution" value="2.75 A"/>
    <property type="chains" value="A/B=1-680"/>
</dbReference>
<dbReference type="PDB" id="5XQ1">
    <property type="method" value="X-ray"/>
    <property type="resolution" value="2.95 A"/>
    <property type="chains" value="A/B=1-680"/>
</dbReference>
<dbReference type="PDB" id="8TEC">
    <property type="method" value="X-ray"/>
    <property type="resolution" value="2.04 A"/>
    <property type="chains" value="A/B=1-680"/>
</dbReference>
<dbReference type="PDB" id="8TEE">
    <property type="method" value="X-ray"/>
    <property type="resolution" value="2.49 A"/>
    <property type="chains" value="A/B=1-680"/>
</dbReference>
<dbReference type="PDBsum" id="5XPY"/>
<dbReference type="PDBsum" id="5XPZ"/>
<dbReference type="PDBsum" id="5XQ0"/>
<dbReference type="PDBsum" id="5XQ1"/>
<dbReference type="PDBsum" id="8TEC"/>
<dbReference type="PDBsum" id="8TEE"/>
<dbReference type="BMRB" id="Q8CIB5"/>
<dbReference type="SMR" id="Q8CIB5"/>
<dbReference type="BioGRID" id="230085">
    <property type="interactions" value="24"/>
</dbReference>
<dbReference type="FunCoup" id="Q8CIB5">
    <property type="interactions" value="2456"/>
</dbReference>
<dbReference type="IntAct" id="Q8CIB5">
    <property type="interactions" value="3"/>
</dbReference>
<dbReference type="STRING" id="10090.ENSMUSP00000044554"/>
<dbReference type="ChEMBL" id="CHEMBL4879490"/>
<dbReference type="GlyGen" id="Q8CIB5">
    <property type="glycosylation" value="2 sites, 1 N-linked glycan (1 site), 1 O-linked glycan (1 site)"/>
</dbReference>
<dbReference type="iPTMnet" id="Q8CIB5"/>
<dbReference type="PhosphoSitePlus" id="Q8CIB5"/>
<dbReference type="SwissPalm" id="Q8CIB5"/>
<dbReference type="jPOST" id="Q8CIB5"/>
<dbReference type="PaxDb" id="10090-ENSMUSP00000044554"/>
<dbReference type="ProteomicsDB" id="271741"/>
<dbReference type="Pumba" id="Q8CIB5"/>
<dbReference type="Antibodypedia" id="23904">
    <property type="antibodies" value="326 antibodies from 32 providers"/>
</dbReference>
<dbReference type="DNASU" id="218952"/>
<dbReference type="Ensembl" id="ENSMUST00000045905.15">
    <property type="protein sequence ID" value="ENSMUSP00000044554.7"/>
    <property type="gene ID" value="ENSMUSG00000037712.18"/>
</dbReference>
<dbReference type="GeneID" id="218952"/>
<dbReference type="KEGG" id="mmu:218952"/>
<dbReference type="UCSC" id="uc007tgq.1">
    <property type="organism name" value="mouse"/>
</dbReference>
<dbReference type="AGR" id="MGI:2385001"/>
<dbReference type="CTD" id="10979"/>
<dbReference type="MGI" id="MGI:2385001">
    <property type="gene designation" value="Fermt2"/>
</dbReference>
<dbReference type="VEuPathDB" id="HostDB:ENSMUSG00000037712"/>
<dbReference type="eggNOG" id="KOG3727">
    <property type="taxonomic scope" value="Eukaryota"/>
</dbReference>
<dbReference type="GeneTree" id="ENSGT00390000013444"/>
<dbReference type="HOGENOM" id="CLU_011611_1_0_1"/>
<dbReference type="InParanoid" id="Q8CIB5"/>
<dbReference type="OMA" id="PEHGIHY"/>
<dbReference type="OrthoDB" id="10057618at2759"/>
<dbReference type="PhylomeDB" id="Q8CIB5"/>
<dbReference type="TreeFam" id="TF314677"/>
<dbReference type="Reactome" id="R-MMU-446353">
    <property type="pathway name" value="Cell-extracellular matrix interactions"/>
</dbReference>
<dbReference type="Reactome" id="R-MMU-9013149">
    <property type="pathway name" value="RAC1 GTPase cycle"/>
</dbReference>
<dbReference type="Reactome" id="R-MMU-9013423">
    <property type="pathway name" value="RAC3 GTPase cycle"/>
</dbReference>
<dbReference type="BioGRID-ORCS" id="218952">
    <property type="hits" value="14 hits in 77 CRISPR screens"/>
</dbReference>
<dbReference type="ChiTaRS" id="Fermt2">
    <property type="organism name" value="mouse"/>
</dbReference>
<dbReference type="PRO" id="PR:Q8CIB5"/>
<dbReference type="Proteomes" id="UP000000589">
    <property type="component" value="Chromosome 14"/>
</dbReference>
<dbReference type="RNAct" id="Q8CIB5">
    <property type="molecule type" value="protein"/>
</dbReference>
<dbReference type="Bgee" id="ENSMUSG00000037712">
    <property type="expression patterns" value="Expressed in ureter smooth muscle and 264 other cell types or tissues"/>
</dbReference>
<dbReference type="ExpressionAtlas" id="Q8CIB5">
    <property type="expression patterns" value="baseline and differential"/>
</dbReference>
<dbReference type="GO" id="GO:0005912">
    <property type="term" value="C:adherens junction"/>
    <property type="evidence" value="ECO:0007669"/>
    <property type="project" value="Ensembl"/>
</dbReference>
<dbReference type="GO" id="GO:0005938">
    <property type="term" value="C:cell cortex"/>
    <property type="evidence" value="ECO:0007669"/>
    <property type="project" value="UniProtKB-SubCell"/>
</dbReference>
<dbReference type="GO" id="GO:0009986">
    <property type="term" value="C:cell surface"/>
    <property type="evidence" value="ECO:0007669"/>
    <property type="project" value="UniProtKB-SubCell"/>
</dbReference>
<dbReference type="GO" id="GO:0005737">
    <property type="term" value="C:cytoplasm"/>
    <property type="evidence" value="ECO:0000250"/>
    <property type="project" value="UniProtKB"/>
</dbReference>
<dbReference type="GO" id="GO:0009898">
    <property type="term" value="C:cytoplasmic side of plasma membrane"/>
    <property type="evidence" value="ECO:0000250"/>
    <property type="project" value="UniProtKB"/>
</dbReference>
<dbReference type="GO" id="GO:0005829">
    <property type="term" value="C:cytosol"/>
    <property type="evidence" value="ECO:0007669"/>
    <property type="project" value="Ensembl"/>
</dbReference>
<dbReference type="GO" id="GO:0005925">
    <property type="term" value="C:focal adhesion"/>
    <property type="evidence" value="ECO:0000250"/>
    <property type="project" value="UniProtKB"/>
</dbReference>
<dbReference type="GO" id="GO:0031674">
    <property type="term" value="C:I band"/>
    <property type="evidence" value="ECO:0007669"/>
    <property type="project" value="UniProtKB-SubCell"/>
</dbReference>
<dbReference type="GO" id="GO:0031258">
    <property type="term" value="C:lamellipodium membrane"/>
    <property type="evidence" value="ECO:0007669"/>
    <property type="project" value="UniProtKB-SubCell"/>
</dbReference>
<dbReference type="GO" id="GO:0005654">
    <property type="term" value="C:nucleoplasm"/>
    <property type="evidence" value="ECO:0007669"/>
    <property type="project" value="Ensembl"/>
</dbReference>
<dbReference type="GO" id="GO:0005634">
    <property type="term" value="C:nucleus"/>
    <property type="evidence" value="ECO:0000250"/>
    <property type="project" value="UniProtKB"/>
</dbReference>
<dbReference type="GO" id="GO:0001725">
    <property type="term" value="C:stress fiber"/>
    <property type="evidence" value="ECO:0000314"/>
    <property type="project" value="MGI"/>
</dbReference>
<dbReference type="GO" id="GO:0051015">
    <property type="term" value="F:actin filament binding"/>
    <property type="evidence" value="ECO:0000314"/>
    <property type="project" value="MGI"/>
</dbReference>
<dbReference type="GO" id="GO:0005547">
    <property type="term" value="F:phosphatidylinositol-3,4,5-trisphosphate binding"/>
    <property type="evidence" value="ECO:0000250"/>
    <property type="project" value="UniProtKB"/>
</dbReference>
<dbReference type="GO" id="GO:0043539">
    <property type="term" value="F:protein serine/threonine kinase activator activity"/>
    <property type="evidence" value="ECO:0007669"/>
    <property type="project" value="Ensembl"/>
</dbReference>
<dbReference type="GO" id="GO:0120283">
    <property type="term" value="F:protein serine/threonine kinase binding"/>
    <property type="evidence" value="ECO:0007669"/>
    <property type="project" value="Ensembl"/>
</dbReference>
<dbReference type="GO" id="GO:0046332">
    <property type="term" value="F:SMAD binding"/>
    <property type="evidence" value="ECO:0007669"/>
    <property type="project" value="Ensembl"/>
</dbReference>
<dbReference type="GO" id="GO:0034713">
    <property type="term" value="F:type I transforming growth factor beta receptor binding"/>
    <property type="evidence" value="ECO:0007669"/>
    <property type="project" value="Ensembl"/>
</dbReference>
<dbReference type="GO" id="GO:0034334">
    <property type="term" value="P:adherens junction maintenance"/>
    <property type="evidence" value="ECO:0000315"/>
    <property type="project" value="ARUK-UCL"/>
</dbReference>
<dbReference type="GO" id="GO:0007160">
    <property type="term" value="P:cell-matrix adhesion"/>
    <property type="evidence" value="ECO:0000315"/>
    <property type="project" value="UniProtKB"/>
</dbReference>
<dbReference type="GO" id="GO:0048041">
    <property type="term" value="P:focal adhesion assembly"/>
    <property type="evidence" value="ECO:0000315"/>
    <property type="project" value="UniProtKB"/>
</dbReference>
<dbReference type="GO" id="GO:0033622">
    <property type="term" value="P:integrin activation"/>
    <property type="evidence" value="ECO:0000315"/>
    <property type="project" value="UniProtKB"/>
</dbReference>
<dbReference type="GO" id="GO:0007229">
    <property type="term" value="P:integrin-mediated signaling pathway"/>
    <property type="evidence" value="ECO:0000250"/>
    <property type="project" value="UniProtKB"/>
</dbReference>
<dbReference type="GO" id="GO:0060173">
    <property type="term" value="P:limb development"/>
    <property type="evidence" value="ECO:0000315"/>
    <property type="project" value="ARUK-UCL"/>
</dbReference>
<dbReference type="GO" id="GO:0045599">
    <property type="term" value="P:negative regulation of fat cell differentiation"/>
    <property type="evidence" value="ECO:0000315"/>
    <property type="project" value="ARUK-UCL"/>
</dbReference>
<dbReference type="GO" id="GO:0043116">
    <property type="term" value="P:negative regulation of vascular permeability"/>
    <property type="evidence" value="ECO:0000315"/>
    <property type="project" value="ARUK-UCL"/>
</dbReference>
<dbReference type="GO" id="GO:0010718">
    <property type="term" value="P:positive regulation of epithelial to mesenchymal transition"/>
    <property type="evidence" value="ECO:0007669"/>
    <property type="project" value="Ensembl"/>
</dbReference>
<dbReference type="GO" id="GO:0070374">
    <property type="term" value="P:positive regulation of ERK1 and ERK2 cascade"/>
    <property type="evidence" value="ECO:0007669"/>
    <property type="project" value="Ensembl"/>
</dbReference>
<dbReference type="GO" id="GO:0051894">
    <property type="term" value="P:positive regulation of focal adhesion assembly"/>
    <property type="evidence" value="ECO:0007669"/>
    <property type="project" value="Ensembl"/>
</dbReference>
<dbReference type="GO" id="GO:0033625">
    <property type="term" value="P:positive regulation of integrin activation"/>
    <property type="evidence" value="ECO:0007669"/>
    <property type="project" value="Ensembl"/>
</dbReference>
<dbReference type="GO" id="GO:1902462">
    <property type="term" value="P:positive regulation of mesenchymal stem cell proliferation"/>
    <property type="evidence" value="ECO:0007669"/>
    <property type="project" value="Ensembl"/>
</dbReference>
<dbReference type="GO" id="GO:0045669">
    <property type="term" value="P:positive regulation of osteoblast differentiation"/>
    <property type="evidence" value="ECO:0000315"/>
    <property type="project" value="ARUK-UCL"/>
</dbReference>
<dbReference type="GO" id="GO:0051897">
    <property type="term" value="P:positive regulation of phosphatidylinositol 3-kinase/protein kinase B signal transduction"/>
    <property type="evidence" value="ECO:0007669"/>
    <property type="project" value="Ensembl"/>
</dbReference>
<dbReference type="GO" id="GO:1900182">
    <property type="term" value="P:positive regulation of protein localization to nucleus"/>
    <property type="evidence" value="ECO:0007669"/>
    <property type="project" value="Ensembl"/>
</dbReference>
<dbReference type="GO" id="GO:0035025">
    <property type="term" value="P:positive regulation of Rho protein signal transduction"/>
    <property type="evidence" value="ECO:0007669"/>
    <property type="project" value="Ensembl"/>
</dbReference>
<dbReference type="GO" id="GO:0051496">
    <property type="term" value="P:positive regulation of stress fiber assembly"/>
    <property type="evidence" value="ECO:0007669"/>
    <property type="project" value="Ensembl"/>
</dbReference>
<dbReference type="GO" id="GO:1900026">
    <property type="term" value="P:positive regulation of substrate adhesion-dependent cell spreading"/>
    <property type="evidence" value="ECO:0007669"/>
    <property type="project" value="Ensembl"/>
</dbReference>
<dbReference type="GO" id="GO:1903691">
    <property type="term" value="P:positive regulation of wound healing, spreading of epidermal cells"/>
    <property type="evidence" value="ECO:0007669"/>
    <property type="project" value="Ensembl"/>
</dbReference>
<dbReference type="GO" id="GO:1902414">
    <property type="term" value="P:protein localization to cell junction"/>
    <property type="evidence" value="ECO:0007669"/>
    <property type="project" value="Ensembl"/>
</dbReference>
<dbReference type="GO" id="GO:0072657">
    <property type="term" value="P:protein localization to membrane"/>
    <property type="evidence" value="ECO:0000315"/>
    <property type="project" value="UniProtKB"/>
</dbReference>
<dbReference type="GO" id="GO:0008360">
    <property type="term" value="P:regulation of cell shape"/>
    <property type="evidence" value="ECO:0007669"/>
    <property type="project" value="UniProtKB-KW"/>
</dbReference>
<dbReference type="GO" id="GO:0034446">
    <property type="term" value="P:substrate adhesion-dependent cell spreading"/>
    <property type="evidence" value="ECO:0000315"/>
    <property type="project" value="UniProtKB"/>
</dbReference>
<dbReference type="GO" id="GO:0007179">
    <property type="term" value="P:transforming growth factor beta receptor signaling pathway"/>
    <property type="evidence" value="ECO:0000250"/>
    <property type="project" value="UniProtKB"/>
</dbReference>
<dbReference type="GO" id="GO:0016055">
    <property type="term" value="P:Wnt signaling pathway"/>
    <property type="evidence" value="ECO:0000250"/>
    <property type="project" value="UniProtKB"/>
</dbReference>
<dbReference type="CDD" id="cd14473">
    <property type="entry name" value="FERM_B-lobe"/>
    <property type="match status" value="1"/>
</dbReference>
<dbReference type="CDD" id="cd17181">
    <property type="entry name" value="FERM_F0_KIND2"/>
    <property type="match status" value="1"/>
</dbReference>
<dbReference type="CDD" id="cd17184">
    <property type="entry name" value="FERM_F1_KIND2"/>
    <property type="match status" value="1"/>
</dbReference>
<dbReference type="CDD" id="cd01237">
    <property type="entry name" value="PH_fermitin"/>
    <property type="match status" value="1"/>
</dbReference>
<dbReference type="FunFam" id="2.30.29.30:FF:000037">
    <property type="entry name" value="Fermitin family homolog 2"/>
    <property type="match status" value="1"/>
</dbReference>
<dbReference type="FunFam" id="2.30.29.30:FF:000057">
    <property type="entry name" value="Fermitin family homolog 2 (Drosophila)"/>
    <property type="match status" value="1"/>
</dbReference>
<dbReference type="FunFam" id="3.10.20.90:FF:000035">
    <property type="entry name" value="Fermitin family homolog 2 (Drosophila)"/>
    <property type="match status" value="1"/>
</dbReference>
<dbReference type="Gene3D" id="3.10.20.90">
    <property type="entry name" value="Phosphatidylinositol 3-kinase Catalytic Subunit, Chain A, domain 1"/>
    <property type="match status" value="2"/>
</dbReference>
<dbReference type="Gene3D" id="2.30.29.30">
    <property type="entry name" value="Pleckstrin-homology domain (PH domain)/Phosphotyrosine-binding domain (PTB)"/>
    <property type="match status" value="2"/>
</dbReference>
<dbReference type="InterPro" id="IPR019749">
    <property type="entry name" value="Band_41_domain"/>
</dbReference>
<dbReference type="InterPro" id="IPR035963">
    <property type="entry name" value="FERM_2"/>
</dbReference>
<dbReference type="InterPro" id="IPR019748">
    <property type="entry name" value="FERM_central"/>
</dbReference>
<dbReference type="InterPro" id="IPR037843">
    <property type="entry name" value="Kindlin/fermitin"/>
</dbReference>
<dbReference type="InterPro" id="IPR040790">
    <property type="entry name" value="Kindlin_2_N"/>
</dbReference>
<dbReference type="InterPro" id="IPR011993">
    <property type="entry name" value="PH-like_dom_sf"/>
</dbReference>
<dbReference type="InterPro" id="IPR001849">
    <property type="entry name" value="PH_domain"/>
</dbReference>
<dbReference type="InterPro" id="IPR037837">
    <property type="entry name" value="PH_Kindlin/fermitin"/>
</dbReference>
<dbReference type="PANTHER" id="PTHR16160">
    <property type="entry name" value="FERMITIN 2-RELATED"/>
    <property type="match status" value="1"/>
</dbReference>
<dbReference type="PANTHER" id="PTHR16160:SF11">
    <property type="entry name" value="FERMITIN FAMILY HOMOLOG 2"/>
    <property type="match status" value="1"/>
</dbReference>
<dbReference type="Pfam" id="PF00373">
    <property type="entry name" value="FERM_M"/>
    <property type="match status" value="1"/>
</dbReference>
<dbReference type="Pfam" id="PF18124">
    <property type="entry name" value="Kindlin_2_N"/>
    <property type="match status" value="1"/>
</dbReference>
<dbReference type="Pfam" id="PF00169">
    <property type="entry name" value="PH"/>
    <property type="match status" value="1"/>
</dbReference>
<dbReference type="SMART" id="SM00295">
    <property type="entry name" value="B41"/>
    <property type="match status" value="1"/>
</dbReference>
<dbReference type="SMART" id="SM00233">
    <property type="entry name" value="PH"/>
    <property type="match status" value="1"/>
</dbReference>
<dbReference type="SUPFAM" id="SSF50729">
    <property type="entry name" value="PH domain-like"/>
    <property type="match status" value="2"/>
</dbReference>
<dbReference type="SUPFAM" id="SSF47031">
    <property type="entry name" value="Second domain of FERM"/>
    <property type="match status" value="2"/>
</dbReference>
<dbReference type="PROSITE" id="PS50003">
    <property type="entry name" value="PH_DOMAIN"/>
    <property type="match status" value="1"/>
</dbReference>